<feature type="chain" id="PRO_0000299957" description="Ribulose bisphosphate carboxylase large chain">
    <location>
        <begin position="1"/>
        <end position="473"/>
    </location>
</feature>
<feature type="active site" description="Proton acceptor" evidence="1">
    <location>
        <position position="168"/>
    </location>
</feature>
<feature type="active site" description="Proton acceptor" evidence="1">
    <location>
        <position position="287"/>
    </location>
</feature>
<feature type="binding site" description="in homodimeric partner" evidence="1">
    <location>
        <position position="116"/>
    </location>
    <ligand>
        <name>substrate</name>
    </ligand>
</feature>
<feature type="binding site" evidence="1">
    <location>
        <position position="166"/>
    </location>
    <ligand>
        <name>substrate</name>
    </ligand>
</feature>
<feature type="binding site" evidence="1">
    <location>
        <position position="170"/>
    </location>
    <ligand>
        <name>substrate</name>
    </ligand>
</feature>
<feature type="binding site" description="via carbamate group" evidence="1">
    <location>
        <position position="194"/>
    </location>
    <ligand>
        <name>Mg(2+)</name>
        <dbReference type="ChEBI" id="CHEBI:18420"/>
    </ligand>
</feature>
<feature type="binding site" evidence="1">
    <location>
        <position position="196"/>
    </location>
    <ligand>
        <name>Mg(2+)</name>
        <dbReference type="ChEBI" id="CHEBI:18420"/>
    </ligand>
</feature>
<feature type="binding site" evidence="1">
    <location>
        <position position="197"/>
    </location>
    <ligand>
        <name>Mg(2+)</name>
        <dbReference type="ChEBI" id="CHEBI:18420"/>
    </ligand>
</feature>
<feature type="binding site" evidence="1">
    <location>
        <position position="288"/>
    </location>
    <ligand>
        <name>substrate</name>
    </ligand>
</feature>
<feature type="binding site" evidence="1">
    <location>
        <position position="320"/>
    </location>
    <ligand>
        <name>substrate</name>
    </ligand>
</feature>
<feature type="binding site" evidence="1">
    <location>
        <position position="372"/>
    </location>
    <ligand>
        <name>substrate</name>
    </ligand>
</feature>
<feature type="site" description="Transition state stabilizer" evidence="1">
    <location>
        <position position="327"/>
    </location>
</feature>
<feature type="modified residue" description="N6-carboxylysine" evidence="1">
    <location>
        <position position="194"/>
    </location>
</feature>
<name>RBL_ALKEH</name>
<sequence>MSSKSYSAGVKDYRDTYWEPDYQVKDSDFLACFKVVPQAGVPREEAAAAVAAESSTGTWTTVWTDLLTDLDYYKGRAYKIEDVPGDDEAFYAFIAYPIDLFEESSVVNVFTSLVGNVFGFKAVRSLRLEDVRIPLAYVMTCNGPPHGIQVERDKMDKYGRGLLGCTIKPKLGLSAKNYGRAVYECLRGGLDFTKDDENVNSQPFMRWRDRFLFVQEATEKAQQETGERKGHYLNVTAPSPEEMYERAEFAKEIGAPIIMHDFLTGGFCANTGLARWCRKNGMLLHIHRAMHAVMDRNPRHGIHFRVLAKALRLSGGDHLHTGTVVGKLEGDRAATEGWIDLLRERFIPEDRARGIFFDQDWGAMPGVFAVASGGIHVWHMPALVSIFGDDAVFQFGGGTLGHPWGNAAGAAANRVALEACVKARNEGRNLEREGKEILQAAAQHSPELKIAMETWKEIKFEFETVDKLDTTHR</sequence>
<evidence type="ECO:0000255" key="1">
    <source>
        <dbReference type="HAMAP-Rule" id="MF_01338"/>
    </source>
</evidence>
<reference key="1">
    <citation type="submission" date="2006-08" db="EMBL/GenBank/DDBJ databases">
        <title>Complete sequence of Alkalilimnicola ehrilichei MLHE-1.</title>
        <authorList>
            <person name="Copeland A."/>
            <person name="Lucas S."/>
            <person name="Lapidus A."/>
            <person name="Barry K."/>
            <person name="Detter J.C."/>
            <person name="Glavina del Rio T."/>
            <person name="Hammon N."/>
            <person name="Israni S."/>
            <person name="Dalin E."/>
            <person name="Tice H."/>
            <person name="Pitluck S."/>
            <person name="Sims D."/>
            <person name="Brettin T."/>
            <person name="Bruce D."/>
            <person name="Han C."/>
            <person name="Tapia R."/>
            <person name="Gilna P."/>
            <person name="Schmutz J."/>
            <person name="Larimer F."/>
            <person name="Land M."/>
            <person name="Hauser L."/>
            <person name="Kyrpides N."/>
            <person name="Mikhailova N."/>
            <person name="Oremland R.S."/>
            <person name="Hoeft S.E."/>
            <person name="Switzer-Blum J."/>
            <person name="Kulp T."/>
            <person name="King G."/>
            <person name="Tabita R."/>
            <person name="Witte B."/>
            <person name="Santini J.M."/>
            <person name="Basu P."/>
            <person name="Hollibaugh J.T."/>
            <person name="Xie G."/>
            <person name="Stolz J.F."/>
            <person name="Richardson P."/>
        </authorList>
    </citation>
    <scope>NUCLEOTIDE SEQUENCE [LARGE SCALE GENOMIC DNA]</scope>
    <source>
        <strain>ATCC BAA-1101 / DSM 17681 / MLHE-1</strain>
    </source>
</reference>
<accession>Q0A4R1</accession>
<organism>
    <name type="scientific">Alkalilimnicola ehrlichii (strain ATCC BAA-1101 / DSM 17681 / MLHE-1)</name>
    <dbReference type="NCBI Taxonomy" id="187272"/>
    <lineage>
        <taxon>Bacteria</taxon>
        <taxon>Pseudomonadati</taxon>
        <taxon>Pseudomonadota</taxon>
        <taxon>Gammaproteobacteria</taxon>
        <taxon>Chromatiales</taxon>
        <taxon>Ectothiorhodospiraceae</taxon>
        <taxon>Alkalilimnicola</taxon>
    </lineage>
</organism>
<keyword id="KW-0113">Calvin cycle</keyword>
<keyword id="KW-0120">Carbon dioxide fixation</keyword>
<keyword id="KW-0456">Lyase</keyword>
<keyword id="KW-0460">Magnesium</keyword>
<keyword id="KW-0479">Metal-binding</keyword>
<keyword id="KW-0503">Monooxygenase</keyword>
<keyword id="KW-0560">Oxidoreductase</keyword>
<keyword id="KW-1185">Reference proteome</keyword>
<protein>
    <recommendedName>
        <fullName evidence="1">Ribulose bisphosphate carboxylase large chain</fullName>
        <shortName evidence="1">RuBisCO large subunit</shortName>
        <ecNumber evidence="1">4.1.1.39</ecNumber>
    </recommendedName>
</protein>
<comment type="function">
    <text evidence="1">RuBisCO catalyzes two reactions: the carboxylation of D-ribulose 1,5-bisphosphate, the primary event in carbon dioxide fixation, as well as the oxidative fragmentation of the pentose substrate. Both reactions occur simultaneously and in competition at the same active site.</text>
</comment>
<comment type="catalytic activity">
    <reaction evidence="1">
        <text>2 (2R)-3-phosphoglycerate + 2 H(+) = D-ribulose 1,5-bisphosphate + CO2 + H2O</text>
        <dbReference type="Rhea" id="RHEA:23124"/>
        <dbReference type="ChEBI" id="CHEBI:15377"/>
        <dbReference type="ChEBI" id="CHEBI:15378"/>
        <dbReference type="ChEBI" id="CHEBI:16526"/>
        <dbReference type="ChEBI" id="CHEBI:57870"/>
        <dbReference type="ChEBI" id="CHEBI:58272"/>
        <dbReference type="EC" id="4.1.1.39"/>
    </reaction>
</comment>
<comment type="catalytic activity">
    <reaction evidence="1">
        <text>D-ribulose 1,5-bisphosphate + O2 = 2-phosphoglycolate + (2R)-3-phosphoglycerate + 2 H(+)</text>
        <dbReference type="Rhea" id="RHEA:36631"/>
        <dbReference type="ChEBI" id="CHEBI:15378"/>
        <dbReference type="ChEBI" id="CHEBI:15379"/>
        <dbReference type="ChEBI" id="CHEBI:57870"/>
        <dbReference type="ChEBI" id="CHEBI:58033"/>
        <dbReference type="ChEBI" id="CHEBI:58272"/>
    </reaction>
</comment>
<comment type="cofactor">
    <cofactor evidence="1">
        <name>Mg(2+)</name>
        <dbReference type="ChEBI" id="CHEBI:18420"/>
    </cofactor>
    <text evidence="1">Binds 1 Mg(2+) ion per subunit.</text>
</comment>
<comment type="subunit">
    <text evidence="1">Heterohexadecamer of 8 large chains and 8 small chains.</text>
</comment>
<comment type="miscellaneous">
    <text evidence="1">The basic functional RuBisCO is composed of a large chain homodimer in a 'head-to-tail' conformation. In form I RuBisCO this homodimer is arranged in a barrel-like tetramer with the small subunits forming a tetrameric 'cap' on each end of the 'barrel'.</text>
</comment>
<comment type="similarity">
    <text evidence="1">Belongs to the RuBisCO large chain family. Type I subfamily.</text>
</comment>
<gene>
    <name evidence="1" type="primary">cbbL</name>
    <name type="ordered locus">Mlg_2836</name>
</gene>
<dbReference type="EC" id="4.1.1.39" evidence="1"/>
<dbReference type="EMBL" id="CP000453">
    <property type="protein sequence ID" value="ABI58176.1"/>
    <property type="molecule type" value="Genomic_DNA"/>
</dbReference>
<dbReference type="RefSeq" id="WP_011630569.1">
    <property type="nucleotide sequence ID" value="NC_008340.1"/>
</dbReference>
<dbReference type="SMR" id="Q0A4R1"/>
<dbReference type="KEGG" id="aeh:Mlg_2836"/>
<dbReference type="eggNOG" id="COG1850">
    <property type="taxonomic scope" value="Bacteria"/>
</dbReference>
<dbReference type="HOGENOM" id="CLU_031450_2_0_6"/>
<dbReference type="OrthoDB" id="9770811at2"/>
<dbReference type="Proteomes" id="UP000001962">
    <property type="component" value="Chromosome"/>
</dbReference>
<dbReference type="GO" id="GO:0000287">
    <property type="term" value="F:magnesium ion binding"/>
    <property type="evidence" value="ECO:0007669"/>
    <property type="project" value="UniProtKB-UniRule"/>
</dbReference>
<dbReference type="GO" id="GO:0004497">
    <property type="term" value="F:monooxygenase activity"/>
    <property type="evidence" value="ECO:0007669"/>
    <property type="project" value="UniProtKB-KW"/>
</dbReference>
<dbReference type="GO" id="GO:0016984">
    <property type="term" value="F:ribulose-bisphosphate carboxylase activity"/>
    <property type="evidence" value="ECO:0007669"/>
    <property type="project" value="UniProtKB-UniRule"/>
</dbReference>
<dbReference type="GO" id="GO:0019253">
    <property type="term" value="P:reductive pentose-phosphate cycle"/>
    <property type="evidence" value="ECO:0007669"/>
    <property type="project" value="UniProtKB-UniRule"/>
</dbReference>
<dbReference type="Gene3D" id="3.20.20.110">
    <property type="entry name" value="Ribulose bisphosphate carboxylase, large subunit, C-terminal domain"/>
    <property type="match status" value="1"/>
</dbReference>
<dbReference type="Gene3D" id="3.30.70.150">
    <property type="entry name" value="RuBisCO large subunit, N-terminal domain"/>
    <property type="match status" value="1"/>
</dbReference>
<dbReference type="HAMAP" id="MF_01338">
    <property type="entry name" value="RuBisCO_L_type1"/>
    <property type="match status" value="1"/>
</dbReference>
<dbReference type="InterPro" id="IPR033966">
    <property type="entry name" value="RuBisCO"/>
</dbReference>
<dbReference type="InterPro" id="IPR020878">
    <property type="entry name" value="RuBisCo_large_chain_AS"/>
</dbReference>
<dbReference type="InterPro" id="IPR000685">
    <property type="entry name" value="RuBisCO_lsu_C"/>
</dbReference>
<dbReference type="InterPro" id="IPR036376">
    <property type="entry name" value="RuBisCO_lsu_C_sf"/>
</dbReference>
<dbReference type="InterPro" id="IPR017443">
    <property type="entry name" value="RuBisCO_lsu_fd_N"/>
</dbReference>
<dbReference type="InterPro" id="IPR036422">
    <property type="entry name" value="RuBisCO_lsu_N_sf"/>
</dbReference>
<dbReference type="InterPro" id="IPR020888">
    <property type="entry name" value="RuBisCO_lsuI"/>
</dbReference>
<dbReference type="NCBIfam" id="NF003252">
    <property type="entry name" value="PRK04208.1"/>
    <property type="match status" value="1"/>
</dbReference>
<dbReference type="PANTHER" id="PTHR42704">
    <property type="entry name" value="RIBULOSE BISPHOSPHATE CARBOXYLASE"/>
    <property type="match status" value="1"/>
</dbReference>
<dbReference type="PANTHER" id="PTHR42704:SF17">
    <property type="entry name" value="RIBULOSE BISPHOSPHATE CARBOXYLASE LARGE CHAIN"/>
    <property type="match status" value="1"/>
</dbReference>
<dbReference type="Pfam" id="PF00016">
    <property type="entry name" value="RuBisCO_large"/>
    <property type="match status" value="1"/>
</dbReference>
<dbReference type="Pfam" id="PF02788">
    <property type="entry name" value="RuBisCO_large_N"/>
    <property type="match status" value="1"/>
</dbReference>
<dbReference type="SFLD" id="SFLDG01052">
    <property type="entry name" value="RuBisCO"/>
    <property type="match status" value="1"/>
</dbReference>
<dbReference type="SFLD" id="SFLDS00014">
    <property type="entry name" value="RuBisCO"/>
    <property type="match status" value="1"/>
</dbReference>
<dbReference type="SFLD" id="SFLDG00301">
    <property type="entry name" value="RuBisCO-like_proteins"/>
    <property type="match status" value="1"/>
</dbReference>
<dbReference type="SUPFAM" id="SSF51649">
    <property type="entry name" value="RuBisCo, C-terminal domain"/>
    <property type="match status" value="1"/>
</dbReference>
<dbReference type="SUPFAM" id="SSF54966">
    <property type="entry name" value="RuBisCO, large subunit, small (N-terminal) domain"/>
    <property type="match status" value="1"/>
</dbReference>
<dbReference type="PROSITE" id="PS00157">
    <property type="entry name" value="RUBISCO_LARGE"/>
    <property type="match status" value="1"/>
</dbReference>
<proteinExistence type="inferred from homology"/>